<gene>
    <name evidence="1" type="primary">lpxD2</name>
    <name type="ordered locus">lpg2944</name>
</gene>
<proteinExistence type="inferred from homology"/>
<sequence>MSNYQFTKPAGPFRLFELAKISGATLYEGKGETFTVSGLAKLSEATSNDLVMLHQKKYVKELKHTAARVCIIGPDYVKYAPDSMYLLVHPNPYKAFALIAQAFYPSEKPPGFIATSAMIESSAIIGVDCFIAHGAYIGNQVKIGNRCKIGVNTYIGDTVTIGDDCLIEDNVSIRHAVIGNNVVIYSGARIGQDGFGFASDANGHYKIPHAGGVIIGNDVEIGANTCIDRGSLDNTVIEDWCRLDNLVQIGHNVKIGKGSVLVAQVGIAGSTELGEHVTLAGQVGVIGHLKIGKGATVLASAKVYKNVKSGDRVGGHPAVSISDWQKQIRFLKTAIKSKKSPKS</sequence>
<evidence type="ECO:0000255" key="1">
    <source>
        <dbReference type="HAMAP-Rule" id="MF_00523"/>
    </source>
</evidence>
<evidence type="ECO:0000305" key="2"/>
<accession>Q5ZRD8</accession>
<feature type="chain" id="PRO_0000264392" description="UDP-3-O-acylglucosamine N-acyltransferase 2">
    <location>
        <begin position="1"/>
        <end position="343"/>
    </location>
</feature>
<feature type="active site" description="Proton acceptor" evidence="1">
    <location>
        <position position="251"/>
    </location>
</feature>
<dbReference type="EC" id="2.3.1.191" evidence="1"/>
<dbReference type="EMBL" id="AE017354">
    <property type="protein sequence ID" value="AAU28990.1"/>
    <property type="status" value="ALT_INIT"/>
    <property type="molecule type" value="Genomic_DNA"/>
</dbReference>
<dbReference type="RefSeq" id="YP_096937.1">
    <property type="nucleotide sequence ID" value="NC_002942.5"/>
</dbReference>
<dbReference type="SMR" id="Q5ZRD8"/>
<dbReference type="STRING" id="272624.lpg2944"/>
<dbReference type="PaxDb" id="272624-lpg2944"/>
<dbReference type="KEGG" id="lpn:lpg2944"/>
<dbReference type="PATRIC" id="fig|272624.6.peg.3144"/>
<dbReference type="eggNOG" id="COG1044">
    <property type="taxonomic scope" value="Bacteria"/>
</dbReference>
<dbReference type="HOGENOM" id="CLU_049865_0_0_6"/>
<dbReference type="OrthoDB" id="9784739at2"/>
<dbReference type="BRENDA" id="2.3.1.191">
    <property type="organism ID" value="2943"/>
</dbReference>
<dbReference type="UniPathway" id="UPA00973"/>
<dbReference type="Proteomes" id="UP000000609">
    <property type="component" value="Chromosome"/>
</dbReference>
<dbReference type="GO" id="GO:0016020">
    <property type="term" value="C:membrane"/>
    <property type="evidence" value="ECO:0007669"/>
    <property type="project" value="GOC"/>
</dbReference>
<dbReference type="GO" id="GO:0016410">
    <property type="term" value="F:N-acyltransferase activity"/>
    <property type="evidence" value="ECO:0007669"/>
    <property type="project" value="InterPro"/>
</dbReference>
<dbReference type="GO" id="GO:0009245">
    <property type="term" value="P:lipid A biosynthetic process"/>
    <property type="evidence" value="ECO:0007669"/>
    <property type="project" value="UniProtKB-UniRule"/>
</dbReference>
<dbReference type="CDD" id="cd03352">
    <property type="entry name" value="LbH_LpxD"/>
    <property type="match status" value="1"/>
</dbReference>
<dbReference type="Gene3D" id="2.160.10.10">
    <property type="entry name" value="Hexapeptide repeat proteins"/>
    <property type="match status" value="1"/>
</dbReference>
<dbReference type="Gene3D" id="3.40.1390.10">
    <property type="entry name" value="MurE/MurF, N-terminal domain"/>
    <property type="match status" value="1"/>
</dbReference>
<dbReference type="HAMAP" id="MF_00523">
    <property type="entry name" value="LpxD"/>
    <property type="match status" value="1"/>
</dbReference>
<dbReference type="InterPro" id="IPR001451">
    <property type="entry name" value="Hexapep"/>
</dbReference>
<dbReference type="InterPro" id="IPR018357">
    <property type="entry name" value="Hexapep_transf_CS"/>
</dbReference>
<dbReference type="InterPro" id="IPR007691">
    <property type="entry name" value="LpxD"/>
</dbReference>
<dbReference type="InterPro" id="IPR011004">
    <property type="entry name" value="Trimer_LpxA-like_sf"/>
</dbReference>
<dbReference type="InterPro" id="IPR020573">
    <property type="entry name" value="UDP_GlcNAc_AcTrfase_non-rep"/>
</dbReference>
<dbReference type="NCBIfam" id="TIGR01853">
    <property type="entry name" value="lipid_A_lpxD"/>
    <property type="match status" value="1"/>
</dbReference>
<dbReference type="NCBIfam" id="NF002060">
    <property type="entry name" value="PRK00892.1"/>
    <property type="match status" value="1"/>
</dbReference>
<dbReference type="PANTHER" id="PTHR43378">
    <property type="entry name" value="UDP-3-O-ACYLGLUCOSAMINE N-ACYLTRANSFERASE"/>
    <property type="match status" value="1"/>
</dbReference>
<dbReference type="PANTHER" id="PTHR43378:SF2">
    <property type="entry name" value="UDP-3-O-ACYLGLUCOSAMINE N-ACYLTRANSFERASE 1, MITOCHONDRIAL-RELATED"/>
    <property type="match status" value="1"/>
</dbReference>
<dbReference type="Pfam" id="PF00132">
    <property type="entry name" value="Hexapep"/>
    <property type="match status" value="1"/>
</dbReference>
<dbReference type="Pfam" id="PF04613">
    <property type="entry name" value="LpxD"/>
    <property type="match status" value="1"/>
</dbReference>
<dbReference type="SUPFAM" id="SSF51161">
    <property type="entry name" value="Trimeric LpxA-like enzymes"/>
    <property type="match status" value="1"/>
</dbReference>
<dbReference type="PROSITE" id="PS00101">
    <property type="entry name" value="HEXAPEP_TRANSFERASES"/>
    <property type="match status" value="1"/>
</dbReference>
<comment type="function">
    <text evidence="1">Catalyzes the N-acylation of UDP-3-O-acylglucosamine using 3-hydroxyacyl-ACP as the acyl donor. Is involved in the biosynthesis of lipid A, a phosphorylated glycolipid that anchors the lipopolysaccharide to the outer membrane of the cell.</text>
</comment>
<comment type="catalytic activity">
    <reaction evidence="1">
        <text>a UDP-3-O-[(3R)-3-hydroxyacyl]-alpha-D-glucosamine + a (3R)-hydroxyacyl-[ACP] = a UDP-2-N,3-O-bis[(3R)-3-hydroxyacyl]-alpha-D-glucosamine + holo-[ACP] + H(+)</text>
        <dbReference type="Rhea" id="RHEA:53836"/>
        <dbReference type="Rhea" id="RHEA-COMP:9685"/>
        <dbReference type="Rhea" id="RHEA-COMP:9945"/>
        <dbReference type="ChEBI" id="CHEBI:15378"/>
        <dbReference type="ChEBI" id="CHEBI:64479"/>
        <dbReference type="ChEBI" id="CHEBI:78827"/>
        <dbReference type="ChEBI" id="CHEBI:137740"/>
        <dbReference type="ChEBI" id="CHEBI:137748"/>
        <dbReference type="EC" id="2.3.1.191"/>
    </reaction>
</comment>
<comment type="pathway">
    <text evidence="1">Bacterial outer membrane biogenesis; LPS lipid A biosynthesis.</text>
</comment>
<comment type="subunit">
    <text evidence="1">Homotrimer.</text>
</comment>
<comment type="similarity">
    <text evidence="1">Belongs to the transferase hexapeptide repeat family. LpxD subfamily.</text>
</comment>
<comment type="sequence caution" evidence="2">
    <conflict type="erroneous initiation">
        <sequence resource="EMBL-CDS" id="AAU28990"/>
    </conflict>
</comment>
<protein>
    <recommendedName>
        <fullName evidence="1">UDP-3-O-acylglucosamine N-acyltransferase 2</fullName>
        <ecNumber evidence="1">2.3.1.191</ecNumber>
    </recommendedName>
</protein>
<organism>
    <name type="scientific">Legionella pneumophila subsp. pneumophila (strain Philadelphia 1 / ATCC 33152 / DSM 7513)</name>
    <dbReference type="NCBI Taxonomy" id="272624"/>
    <lineage>
        <taxon>Bacteria</taxon>
        <taxon>Pseudomonadati</taxon>
        <taxon>Pseudomonadota</taxon>
        <taxon>Gammaproteobacteria</taxon>
        <taxon>Legionellales</taxon>
        <taxon>Legionellaceae</taxon>
        <taxon>Legionella</taxon>
    </lineage>
</organism>
<reference key="1">
    <citation type="journal article" date="2004" name="Science">
        <title>The genomic sequence of the accidental pathogen Legionella pneumophila.</title>
        <authorList>
            <person name="Chien M."/>
            <person name="Morozova I."/>
            <person name="Shi S."/>
            <person name="Sheng H."/>
            <person name="Chen J."/>
            <person name="Gomez S.M."/>
            <person name="Asamani G."/>
            <person name="Hill K."/>
            <person name="Nuara J."/>
            <person name="Feder M."/>
            <person name="Rineer J."/>
            <person name="Greenberg J.J."/>
            <person name="Steshenko V."/>
            <person name="Park S.H."/>
            <person name="Zhao B."/>
            <person name="Teplitskaya E."/>
            <person name="Edwards J.R."/>
            <person name="Pampou S."/>
            <person name="Georghiou A."/>
            <person name="Chou I.-C."/>
            <person name="Iannuccilli W."/>
            <person name="Ulz M.E."/>
            <person name="Kim D.H."/>
            <person name="Geringer-Sameth A."/>
            <person name="Goldsberry C."/>
            <person name="Morozov P."/>
            <person name="Fischer S.G."/>
            <person name="Segal G."/>
            <person name="Qu X."/>
            <person name="Rzhetsky A."/>
            <person name="Zhang P."/>
            <person name="Cayanis E."/>
            <person name="De Jong P.J."/>
            <person name="Ju J."/>
            <person name="Kalachikov S."/>
            <person name="Shuman H.A."/>
            <person name="Russo J.J."/>
        </authorList>
    </citation>
    <scope>NUCLEOTIDE SEQUENCE [LARGE SCALE GENOMIC DNA]</scope>
    <source>
        <strain>Philadelphia 1 / ATCC 33152 / DSM 7513</strain>
    </source>
</reference>
<name>LPXD2_LEGPH</name>
<keyword id="KW-0012">Acyltransferase</keyword>
<keyword id="KW-0441">Lipid A biosynthesis</keyword>
<keyword id="KW-0444">Lipid biosynthesis</keyword>
<keyword id="KW-0443">Lipid metabolism</keyword>
<keyword id="KW-1185">Reference proteome</keyword>
<keyword id="KW-0677">Repeat</keyword>
<keyword id="KW-0808">Transferase</keyword>